<name>IGS22_HUMAN</name>
<protein>
    <recommendedName>
        <fullName>Immunoglobulin superfamily member 22</fullName>
        <shortName>IgSF22</shortName>
    </recommendedName>
</protein>
<evidence type="ECO:0000255" key="1">
    <source>
        <dbReference type="PROSITE-ProRule" id="PRU00316"/>
    </source>
</evidence>
<evidence type="ECO:0000269" key="2">
    <source>
    </source>
</evidence>
<evidence type="ECO:0000269" key="3">
    <source>
    </source>
</evidence>
<evidence type="ECO:0000305" key="4"/>
<organism>
    <name type="scientific">Homo sapiens</name>
    <name type="common">Human</name>
    <dbReference type="NCBI Taxonomy" id="9606"/>
    <lineage>
        <taxon>Eukaryota</taxon>
        <taxon>Metazoa</taxon>
        <taxon>Chordata</taxon>
        <taxon>Craniata</taxon>
        <taxon>Vertebrata</taxon>
        <taxon>Euteleostomi</taxon>
        <taxon>Mammalia</taxon>
        <taxon>Eutheria</taxon>
        <taxon>Euarchontoglires</taxon>
        <taxon>Primates</taxon>
        <taxon>Haplorrhini</taxon>
        <taxon>Catarrhini</taxon>
        <taxon>Hominidae</taxon>
        <taxon>Homo</taxon>
    </lineage>
</organism>
<reference key="1">
    <citation type="journal article" date="2004" name="Nat. Genet.">
        <title>Complete sequencing and characterization of 21,243 full-length human cDNAs.</title>
        <authorList>
            <person name="Ota T."/>
            <person name="Suzuki Y."/>
            <person name="Nishikawa T."/>
            <person name="Otsuki T."/>
            <person name="Sugiyama T."/>
            <person name="Irie R."/>
            <person name="Wakamatsu A."/>
            <person name="Hayashi K."/>
            <person name="Sato H."/>
            <person name="Nagai K."/>
            <person name="Kimura K."/>
            <person name="Makita H."/>
            <person name="Sekine M."/>
            <person name="Obayashi M."/>
            <person name="Nishi T."/>
            <person name="Shibahara T."/>
            <person name="Tanaka T."/>
            <person name="Ishii S."/>
            <person name="Yamamoto J."/>
            <person name="Saito K."/>
            <person name="Kawai Y."/>
            <person name="Isono Y."/>
            <person name="Nakamura Y."/>
            <person name="Nagahari K."/>
            <person name="Murakami K."/>
            <person name="Yasuda T."/>
            <person name="Iwayanagi T."/>
            <person name="Wagatsuma M."/>
            <person name="Shiratori A."/>
            <person name="Sudo H."/>
            <person name="Hosoiri T."/>
            <person name="Kaku Y."/>
            <person name="Kodaira H."/>
            <person name="Kondo H."/>
            <person name="Sugawara M."/>
            <person name="Takahashi M."/>
            <person name="Kanda K."/>
            <person name="Yokoi T."/>
            <person name="Furuya T."/>
            <person name="Kikkawa E."/>
            <person name="Omura Y."/>
            <person name="Abe K."/>
            <person name="Kamihara K."/>
            <person name="Katsuta N."/>
            <person name="Sato K."/>
            <person name="Tanikawa M."/>
            <person name="Yamazaki M."/>
            <person name="Ninomiya K."/>
            <person name="Ishibashi T."/>
            <person name="Yamashita H."/>
            <person name="Murakawa K."/>
            <person name="Fujimori K."/>
            <person name="Tanai H."/>
            <person name="Kimata M."/>
            <person name="Watanabe M."/>
            <person name="Hiraoka S."/>
            <person name="Chiba Y."/>
            <person name="Ishida S."/>
            <person name="Ono Y."/>
            <person name="Takiguchi S."/>
            <person name="Watanabe S."/>
            <person name="Yosida M."/>
            <person name="Hotuta T."/>
            <person name="Kusano J."/>
            <person name="Kanehori K."/>
            <person name="Takahashi-Fujii A."/>
            <person name="Hara H."/>
            <person name="Tanase T.-O."/>
            <person name="Nomura Y."/>
            <person name="Togiya S."/>
            <person name="Komai F."/>
            <person name="Hara R."/>
            <person name="Takeuchi K."/>
            <person name="Arita M."/>
            <person name="Imose N."/>
            <person name="Musashino K."/>
            <person name="Yuuki H."/>
            <person name="Oshima A."/>
            <person name="Sasaki N."/>
            <person name="Aotsuka S."/>
            <person name="Yoshikawa Y."/>
            <person name="Matsunawa H."/>
            <person name="Ichihara T."/>
            <person name="Shiohata N."/>
            <person name="Sano S."/>
            <person name="Moriya S."/>
            <person name="Momiyama H."/>
            <person name="Satoh N."/>
            <person name="Takami S."/>
            <person name="Terashima Y."/>
            <person name="Suzuki O."/>
            <person name="Nakagawa S."/>
            <person name="Senoh A."/>
            <person name="Mizoguchi H."/>
            <person name="Goto Y."/>
            <person name="Shimizu F."/>
            <person name="Wakebe H."/>
            <person name="Hishigaki H."/>
            <person name="Watanabe T."/>
            <person name="Sugiyama A."/>
            <person name="Takemoto M."/>
            <person name="Kawakami B."/>
            <person name="Yamazaki M."/>
            <person name="Watanabe K."/>
            <person name="Kumagai A."/>
            <person name="Itakura S."/>
            <person name="Fukuzumi Y."/>
            <person name="Fujimori Y."/>
            <person name="Komiyama M."/>
            <person name="Tashiro H."/>
            <person name="Tanigami A."/>
            <person name="Fujiwara T."/>
            <person name="Ono T."/>
            <person name="Yamada K."/>
            <person name="Fujii Y."/>
            <person name="Ozaki K."/>
            <person name="Hirao M."/>
            <person name="Ohmori Y."/>
            <person name="Kawabata A."/>
            <person name="Hikiji T."/>
            <person name="Kobatake N."/>
            <person name="Inagaki H."/>
            <person name="Ikema Y."/>
            <person name="Okamoto S."/>
            <person name="Okitani R."/>
            <person name="Kawakami T."/>
            <person name="Noguchi S."/>
            <person name="Itoh T."/>
            <person name="Shigeta K."/>
            <person name="Senba T."/>
            <person name="Matsumura K."/>
            <person name="Nakajima Y."/>
            <person name="Mizuno T."/>
            <person name="Morinaga M."/>
            <person name="Sasaki M."/>
            <person name="Togashi T."/>
            <person name="Oyama M."/>
            <person name="Hata H."/>
            <person name="Watanabe M."/>
            <person name="Komatsu T."/>
            <person name="Mizushima-Sugano J."/>
            <person name="Satoh T."/>
            <person name="Shirai Y."/>
            <person name="Takahashi Y."/>
            <person name="Nakagawa K."/>
            <person name="Okumura K."/>
            <person name="Nagase T."/>
            <person name="Nomura N."/>
            <person name="Kikuchi H."/>
            <person name="Masuho Y."/>
            <person name="Yamashita R."/>
            <person name="Nakai K."/>
            <person name="Yada T."/>
            <person name="Nakamura Y."/>
            <person name="Ohara O."/>
            <person name="Isogai T."/>
            <person name="Sugano S."/>
        </authorList>
    </citation>
    <scope>NUCLEOTIDE SEQUENCE [LARGE SCALE MRNA] (ISOFORM 1)</scope>
    <scope>VARIANTS ILE-414; GLN-472 AND VAL-559</scope>
    <source>
        <tissue>Hippocampus</tissue>
    </source>
</reference>
<reference key="2">
    <citation type="journal article" date="2006" name="Nature">
        <title>Human chromosome 11 DNA sequence and analysis including novel gene identification.</title>
        <authorList>
            <person name="Taylor T.D."/>
            <person name="Noguchi H."/>
            <person name="Totoki Y."/>
            <person name="Toyoda A."/>
            <person name="Kuroki Y."/>
            <person name="Dewar K."/>
            <person name="Lloyd C."/>
            <person name="Itoh T."/>
            <person name="Takeda T."/>
            <person name="Kim D.-W."/>
            <person name="She X."/>
            <person name="Barlow K.F."/>
            <person name="Bloom T."/>
            <person name="Bruford E."/>
            <person name="Chang J.L."/>
            <person name="Cuomo C.A."/>
            <person name="Eichler E."/>
            <person name="FitzGerald M.G."/>
            <person name="Jaffe D.B."/>
            <person name="LaButti K."/>
            <person name="Nicol R."/>
            <person name="Park H.-S."/>
            <person name="Seaman C."/>
            <person name="Sougnez C."/>
            <person name="Yang X."/>
            <person name="Zimmer A.R."/>
            <person name="Zody M.C."/>
            <person name="Birren B.W."/>
            <person name="Nusbaum C."/>
            <person name="Fujiyama A."/>
            <person name="Hattori M."/>
            <person name="Rogers J."/>
            <person name="Lander E.S."/>
            <person name="Sakaki Y."/>
        </authorList>
    </citation>
    <scope>NUCLEOTIDE SEQUENCE [LARGE SCALE GENOMIC DNA]</scope>
</reference>
<reference key="3">
    <citation type="journal article" date="2011" name="Nature">
        <title>Exome sequencing identifies frequent mutation of the SWI/SNF complex gene PBRM1 in renal carcinoma.</title>
        <authorList>
            <person name="Varela I."/>
            <person name="Tarpey P."/>
            <person name="Raine K."/>
            <person name="Huang D."/>
            <person name="Ong C.K."/>
            <person name="Stephens P."/>
            <person name="Davies H."/>
            <person name="Jones D."/>
            <person name="Lin M.L."/>
            <person name="Teague J."/>
            <person name="Bignell G."/>
            <person name="Butler A."/>
            <person name="Cho J."/>
            <person name="Dalgliesh G.L."/>
            <person name="Galappaththige D."/>
            <person name="Greenman C."/>
            <person name="Hardy C."/>
            <person name="Jia M."/>
            <person name="Latimer C."/>
            <person name="Lau K.W."/>
            <person name="Marshall J."/>
            <person name="McLaren S."/>
            <person name="Menzies A."/>
            <person name="Mudie L."/>
            <person name="Stebbings L."/>
            <person name="Largaespada D.A."/>
            <person name="Wessels L.F.A."/>
            <person name="Richard S."/>
            <person name="Kahnoski R.J."/>
            <person name="Anema J."/>
            <person name="Tuveson D.A."/>
            <person name="Perez-Mancera P.A."/>
            <person name="Mustonen V."/>
            <person name="Fischer A."/>
            <person name="Adams D.J."/>
            <person name="Rust A."/>
            <person name="Chan-On W."/>
            <person name="Subimerb C."/>
            <person name="Dykema K."/>
            <person name="Furge K."/>
            <person name="Campbell P.J."/>
            <person name="Teh B.T."/>
            <person name="Stratton M.R."/>
            <person name="Futreal P.A."/>
        </authorList>
    </citation>
    <scope>VARIANT TRP-7</scope>
</reference>
<gene>
    <name type="primary">IGSF22</name>
</gene>
<feature type="chain" id="PRO_0000285255" description="Immunoglobulin superfamily member 22">
    <location>
        <begin position="1"/>
        <end position="903"/>
    </location>
</feature>
<feature type="domain" description="Ig-like 1">
    <location>
        <begin position="67"/>
        <end position="158"/>
    </location>
</feature>
<feature type="domain" description="Ig-like 2">
    <location>
        <begin position="232"/>
        <end position="322"/>
    </location>
</feature>
<feature type="domain" description="Ig-like 3">
    <location>
        <begin position="418"/>
        <end position="508"/>
    </location>
</feature>
<feature type="domain" description="Ig-like 4">
    <location>
        <begin position="606"/>
        <end position="696"/>
    </location>
</feature>
<feature type="domain" description="Fibronectin type-III 1" evidence="1">
    <location>
        <begin position="703"/>
        <end position="798"/>
    </location>
</feature>
<feature type="domain" description="Fibronectin type-III 2" evidence="1">
    <location>
        <begin position="804"/>
        <end position="898"/>
    </location>
</feature>
<feature type="splice variant" id="VSP_047394" description="In isoform 2." evidence="4">
    <original>L</original>
    <variation>LDRPKPPQGRVEFLELSGSCVHMKWKAPKDNGGRPVTQFIVERRAVGKKSWIKIGEVDGKVTNFSTNKVEEGKAYQFRILAVNSEGVSDPLETEEVFAGNPI</variation>
    <location>
        <position position="698"/>
    </location>
</feature>
<feature type="splice variant" id="VSP_047395" description="In isoform 2." evidence="4">
    <original>GLTTT</original>
    <variation>AAPKFDLSARLKSHMVVRAGTALCIHAAFSGSPPPDVIWQKDGVPTKGRETITKSKNHSQFLINSTKRSDSGVYRILLQNEFGEARYDIHVRVADFPRPPTNLRLFEEVPNTVTLTWNHSPDVQEDGEAHYIIMKRDASTATWYTAAERVFSNKYTVTGLLPGRKYYFRVVARNEIGDSEPLDSRDTWLINKDQIQDLSAKLKPYEKKDWRHAPRFVTPLKPHTVLRGQDCTMTCAFLGNPRPTVTLYKGDVNITANSKFWYNSTSGVCTLVIPTCTLKDSGDYSVLVENELGKDRSSCTLTVYDKDDKSVVASITESLQKKSKHLM</variation>
    <location>
        <begin position="899"/>
        <end position="903"/>
    </location>
</feature>
<feature type="sequence variant" id="VAR_064722" description="Found in a renal cell carcinoma sample; somatic mutation; dbSNP:rs117464001." evidence="3">
    <original>R</original>
    <variation>W</variation>
    <location>
        <position position="7"/>
    </location>
</feature>
<feature type="sequence variant" id="VAR_032000" description="In dbSNP:rs10832975.">
    <original>A</original>
    <variation>P</variation>
    <location>
        <position position="94"/>
    </location>
</feature>
<feature type="sequence variant" id="VAR_032001" description="In dbSNP:rs3740710.">
    <original>L</original>
    <variation>R</variation>
    <location>
        <position position="130"/>
    </location>
</feature>
<feature type="sequence variant" id="VAR_032002" description="In dbSNP:rs10766494." evidence="2">
    <original>V</original>
    <variation>I</variation>
    <location>
        <position position="414"/>
    </location>
</feature>
<feature type="sequence variant" id="VAR_032003" description="In dbSNP:rs4424652." evidence="2">
    <original>R</original>
    <variation>Q</variation>
    <location>
        <position position="472"/>
    </location>
</feature>
<feature type="sequence variant" id="VAR_032004" description="In dbSNP:rs3887899.">
    <original>S</original>
    <variation>I</variation>
    <location>
        <position position="503"/>
    </location>
</feature>
<feature type="sequence variant" id="VAR_032005" description="In dbSNP:rs7125943." evidence="2">
    <original>M</original>
    <variation>V</variation>
    <location>
        <position position="559"/>
    </location>
</feature>
<feature type="sequence variant" id="VAR_032006" description="In dbSNP:rs11024769.">
    <original>L</original>
    <variation>F</variation>
    <location>
        <position position="677"/>
    </location>
</feature>
<feature type="sequence conflict" description="In Ref. 1; BAC04488." evidence="4" ref="1">
    <original>F</original>
    <variation>L</variation>
    <location>
        <position position="69"/>
    </location>
</feature>
<feature type="sequence conflict" description="In Ref. 1; BAC04488." evidence="4" ref="1">
    <original>Y</original>
    <variation>H</variation>
    <location>
        <position position="210"/>
    </location>
</feature>
<feature type="sequence conflict" description="In Ref. 1; BAC04488." evidence="4" ref="1">
    <original>R</original>
    <variation>W</variation>
    <location>
        <position position="839"/>
    </location>
</feature>
<comment type="alternative products">
    <event type="alternative splicing"/>
    <isoform>
        <id>Q8N9C0-1</id>
        <name>1</name>
        <sequence type="displayed"/>
    </isoform>
    <isoform>
        <id>Q8N9C0-2</id>
        <name>2</name>
        <sequence type="described" ref="VSP_047394 VSP_047395"/>
    </isoform>
</comment>
<keyword id="KW-0025">Alternative splicing</keyword>
<keyword id="KW-0393">Immunoglobulin domain</keyword>
<keyword id="KW-1185">Reference proteome</keyword>
<keyword id="KW-0677">Repeat</keyword>
<accession>Q8N9C0</accession>
<accession>A6NNA0</accession>
<accession>D6RGV7</accession>
<sequence>MTTIHSRQMLQEHVSMEFSSSTTHVQTFSQTTKIVGEEVVRRKSSSIVEFFSLVTRSSNIPAGDSVPEFVEKPQPVTAPEGDKAVFRARVQGNAKPHISWKRESGIPIKESAKIFYDSINKEHVLKLEPLTSDDSDNYKCIASNDHADAIYTVSLLVTEGQEKMDFKKMLKKRAPPAPKKKQKKVANEKEMLEILSKVPKKDFEKVCMEYGFTDFRGLLRKLKEMKKKVEVEAIRILKPLEDKETKVDTTVVFDCIMELKDPNVKMIWIKGTEPLRIQYSLGKYDVKQMGTKYMLVISNVNMNDAGIYSLSVGDKRMSAELTVLDEPLKFLGEMKPVKVTERQTAVFEIRLSKKEPNFVWKFNGKELKRDDKYEITVSEDGLTHTLKIKDARLSDSGEFSAEAGNLVQKAQLTVDRIPIKFVSNLKNVRVKERSRACLECELTSKDVTLRWKKDGQLLMHGTKYSMNHEGKRAELIIEDAQLSDGGEYTVVAMQDGDPTEYYSTAIVTVEERLATVKSGMSDVHAATGSPAELCVVLNDEKVEGVWLKDGKEITDLPGMQIVKQGAVHKLIFPSMGPEHEGKYTFRAKGTESEASVFIADPPTIDPSVLEALAAHAITVKVGHTAHIKVPFRGKPLPKVTWYKDGMEVTEEERVSMERGEDQALLTISNCVREDSGLILLKLKNDHGSATATLHLSVLEPPGFASQPQVTDVTKEAVTITWNAPTQDGGAPVLGYIVERRKKGSNLWVPVNKDPIQGTKCTVDGLLEDTEYEFRVIAVNKAGPGQPSVPSSSVVAKDPVKPPGLVQDLHVSDSSNSSISLAWREPAEGDPPSGYILEMRAEDTKEWSKCTKIPISGTCYTVGGLIERQKYFFRIRAVNEAGVGEPVELDKGVRAMPPPGLTTT</sequence>
<dbReference type="EMBL" id="AK095113">
    <property type="protein sequence ID" value="BAC04488.1"/>
    <property type="molecule type" value="mRNA"/>
</dbReference>
<dbReference type="EMBL" id="AC103974">
    <property type="status" value="NOT_ANNOTATED_CDS"/>
    <property type="molecule type" value="Genomic_DNA"/>
</dbReference>
<dbReference type="CCDS" id="CCDS41625.2">
    <molecule id="Q8N9C0-2"/>
</dbReference>
<dbReference type="RefSeq" id="NP_775859.4">
    <molecule id="Q8N9C0-2"/>
    <property type="nucleotide sequence ID" value="NM_173588.4"/>
</dbReference>
<dbReference type="RefSeq" id="XP_016873097.1">
    <property type="nucleotide sequence ID" value="XM_017017608.1"/>
</dbReference>
<dbReference type="SMR" id="Q8N9C0"/>
<dbReference type="BioGRID" id="129517">
    <property type="interactions" value="1"/>
</dbReference>
<dbReference type="IntAct" id="Q8N9C0">
    <property type="interactions" value="1"/>
</dbReference>
<dbReference type="MINT" id="Q8N9C0"/>
<dbReference type="STRING" id="9606.ENSP00000421191"/>
<dbReference type="GlyGen" id="Q8N9C0">
    <property type="glycosylation" value="1 site, 1 O-linked glycan (1 site)"/>
</dbReference>
<dbReference type="iPTMnet" id="Q8N9C0"/>
<dbReference type="PhosphoSitePlus" id="Q8N9C0"/>
<dbReference type="BioMuta" id="IGSF22"/>
<dbReference type="DMDM" id="146324946"/>
<dbReference type="jPOST" id="Q8N9C0"/>
<dbReference type="MassIVE" id="Q8N9C0"/>
<dbReference type="Antibodypedia" id="64069">
    <property type="antibodies" value="20 antibodies from 8 providers"/>
</dbReference>
<dbReference type="DNASU" id="283284"/>
<dbReference type="Ensembl" id="ENST00000319338.6">
    <molecule id="Q8N9C0-1"/>
    <property type="protein sequence ID" value="ENSP00000322422.6"/>
    <property type="gene ID" value="ENSG00000179057.14"/>
</dbReference>
<dbReference type="Ensembl" id="ENST00000513874.6">
    <molecule id="Q8N9C0-2"/>
    <property type="protein sequence ID" value="ENSP00000421191.1"/>
    <property type="gene ID" value="ENSG00000179057.14"/>
</dbReference>
<dbReference type="GeneID" id="283284"/>
<dbReference type="KEGG" id="hsa:283284"/>
<dbReference type="MANE-Select" id="ENST00000513874.6">
    <molecule id="Q8N9C0-2"/>
    <property type="protein sequence ID" value="ENSP00000421191.1"/>
    <property type="RefSeq nucleotide sequence ID" value="NM_173588.4"/>
    <property type="RefSeq protein sequence ID" value="NP_775859.4"/>
</dbReference>
<dbReference type="UCSC" id="uc009yht.3">
    <molecule id="Q8N9C0-1"/>
    <property type="organism name" value="human"/>
</dbReference>
<dbReference type="AGR" id="HGNC:26750"/>
<dbReference type="CTD" id="283284"/>
<dbReference type="DisGeNET" id="283284"/>
<dbReference type="GeneCards" id="IGSF22"/>
<dbReference type="HGNC" id="HGNC:26750">
    <property type="gene designation" value="IGSF22"/>
</dbReference>
<dbReference type="HPA" id="ENSG00000179057">
    <property type="expression patterns" value="Tissue enhanced (brain, skin)"/>
</dbReference>
<dbReference type="neXtProt" id="NX_Q8N9C0"/>
<dbReference type="OpenTargets" id="ENSG00000179057"/>
<dbReference type="PharmGKB" id="PA142671662"/>
<dbReference type="VEuPathDB" id="HostDB:ENSG00000179057"/>
<dbReference type="GeneTree" id="ENSGT00940000160123"/>
<dbReference type="HOGENOM" id="CLU_006405_2_0_1"/>
<dbReference type="InParanoid" id="Q8N9C0"/>
<dbReference type="OMA" id="IEPPGFA"/>
<dbReference type="OrthoDB" id="504170at2759"/>
<dbReference type="PAN-GO" id="Q8N9C0">
    <property type="GO annotations" value="0 GO annotations based on evolutionary models"/>
</dbReference>
<dbReference type="PhylomeDB" id="Q8N9C0"/>
<dbReference type="TreeFam" id="TF351819"/>
<dbReference type="PathwayCommons" id="Q8N9C0"/>
<dbReference type="SignaLink" id="Q8N9C0"/>
<dbReference type="BioGRID-ORCS" id="283284">
    <property type="hits" value="7 hits in 1137 CRISPR screens"/>
</dbReference>
<dbReference type="GenomeRNAi" id="283284"/>
<dbReference type="Pharos" id="Q8N9C0">
    <property type="development level" value="Tdark"/>
</dbReference>
<dbReference type="PRO" id="PR:Q8N9C0"/>
<dbReference type="Proteomes" id="UP000005640">
    <property type="component" value="Chromosome 11"/>
</dbReference>
<dbReference type="RNAct" id="Q8N9C0">
    <property type="molecule type" value="protein"/>
</dbReference>
<dbReference type="Bgee" id="ENSG00000179057">
    <property type="expression patterns" value="Expressed in skin of leg and 112 other cell types or tissues"/>
</dbReference>
<dbReference type="CDD" id="cd00063">
    <property type="entry name" value="FN3"/>
    <property type="match status" value="2"/>
</dbReference>
<dbReference type="CDD" id="cd00096">
    <property type="entry name" value="Ig"/>
    <property type="match status" value="2"/>
</dbReference>
<dbReference type="FunFam" id="2.60.40.10:FF:001539">
    <property type="entry name" value="Immunoglobulin superfamily member 22"/>
    <property type="match status" value="1"/>
</dbReference>
<dbReference type="FunFam" id="2.60.40.10:FF:001558">
    <property type="entry name" value="Immunoglobulin superfamily member 22"/>
    <property type="match status" value="1"/>
</dbReference>
<dbReference type="FunFam" id="2.60.40.10:FF:001451">
    <property type="entry name" value="immunoglobulin superfamily member 22"/>
    <property type="match status" value="1"/>
</dbReference>
<dbReference type="FunFam" id="2.60.40.10:FF:001498">
    <property type="entry name" value="immunoglobulin superfamily member 22"/>
    <property type="match status" value="1"/>
</dbReference>
<dbReference type="FunFam" id="2.60.40.10:FF:001522">
    <property type="entry name" value="immunoglobulin superfamily member 22"/>
    <property type="match status" value="1"/>
</dbReference>
<dbReference type="FunFam" id="2.60.40.10:FF:001578">
    <property type="entry name" value="immunoglobulin superfamily member 22"/>
    <property type="match status" value="1"/>
</dbReference>
<dbReference type="FunFam" id="2.60.40.10:FF:001710">
    <property type="entry name" value="immunoglobulin superfamily member 22"/>
    <property type="match status" value="1"/>
</dbReference>
<dbReference type="FunFam" id="2.60.40.10:FF:000034">
    <property type="entry name" value="Titin isoform A"/>
    <property type="match status" value="1"/>
</dbReference>
<dbReference type="Gene3D" id="2.60.40.10">
    <property type="entry name" value="Immunoglobulins"/>
    <property type="match status" value="8"/>
</dbReference>
<dbReference type="InterPro" id="IPR003961">
    <property type="entry name" value="FN3_dom"/>
</dbReference>
<dbReference type="InterPro" id="IPR036116">
    <property type="entry name" value="FN3_sf"/>
</dbReference>
<dbReference type="InterPro" id="IPR007110">
    <property type="entry name" value="Ig-like_dom"/>
</dbReference>
<dbReference type="InterPro" id="IPR036179">
    <property type="entry name" value="Ig-like_dom_sf"/>
</dbReference>
<dbReference type="InterPro" id="IPR013783">
    <property type="entry name" value="Ig-like_fold"/>
</dbReference>
<dbReference type="InterPro" id="IPR013098">
    <property type="entry name" value="Ig_I-set"/>
</dbReference>
<dbReference type="InterPro" id="IPR003599">
    <property type="entry name" value="Ig_sub"/>
</dbReference>
<dbReference type="InterPro" id="IPR003598">
    <property type="entry name" value="Ig_sub2"/>
</dbReference>
<dbReference type="InterPro" id="IPR040849">
    <property type="entry name" value="MyBP-C_THB"/>
</dbReference>
<dbReference type="InterPro" id="IPR050964">
    <property type="entry name" value="Striated_Muscle_Regulatory"/>
</dbReference>
<dbReference type="PANTHER" id="PTHR13817:SF153">
    <property type="entry name" value="IMMUNOGLOBULIN SUPERFAMILY MEMBER 22"/>
    <property type="match status" value="1"/>
</dbReference>
<dbReference type="PANTHER" id="PTHR13817">
    <property type="entry name" value="TITIN"/>
    <property type="match status" value="1"/>
</dbReference>
<dbReference type="Pfam" id="PF00041">
    <property type="entry name" value="fn3"/>
    <property type="match status" value="2"/>
</dbReference>
<dbReference type="Pfam" id="PF07679">
    <property type="entry name" value="I-set"/>
    <property type="match status" value="5"/>
</dbReference>
<dbReference type="Pfam" id="PF18362">
    <property type="entry name" value="THB"/>
    <property type="match status" value="1"/>
</dbReference>
<dbReference type="PRINTS" id="PR00014">
    <property type="entry name" value="FNTYPEIII"/>
</dbReference>
<dbReference type="SMART" id="SM00060">
    <property type="entry name" value="FN3"/>
    <property type="match status" value="2"/>
</dbReference>
<dbReference type="SMART" id="SM00409">
    <property type="entry name" value="IG"/>
    <property type="match status" value="6"/>
</dbReference>
<dbReference type="SMART" id="SM00408">
    <property type="entry name" value="IGc2"/>
    <property type="match status" value="5"/>
</dbReference>
<dbReference type="SUPFAM" id="SSF49265">
    <property type="entry name" value="Fibronectin type III"/>
    <property type="match status" value="1"/>
</dbReference>
<dbReference type="SUPFAM" id="SSF48726">
    <property type="entry name" value="Immunoglobulin"/>
    <property type="match status" value="6"/>
</dbReference>
<dbReference type="PROSITE" id="PS50853">
    <property type="entry name" value="FN3"/>
    <property type="match status" value="2"/>
</dbReference>
<dbReference type="PROSITE" id="PS50835">
    <property type="entry name" value="IG_LIKE"/>
    <property type="match status" value="4"/>
</dbReference>
<proteinExistence type="evidence at transcript level"/>